<name>NLTPD_BRAOT</name>
<accession>Q43304</accession>
<sequence>MAGLMKLACLIFACMIVAGPITSNAALSCGTVSGYVAPCIGYLAQNAPAVPTACCSGVTSLNNMARTTPDRQQACRCLVGAANALPTINVARAAGLPKACGVNIPYKISKTTNCNSVK</sequence>
<gene>
    <name type="primary">WAX9D</name>
</gene>
<organism>
    <name type="scientific">Brassica oleracea var. italica</name>
    <name type="common">Broccoli</name>
    <dbReference type="NCBI Taxonomy" id="36774"/>
    <lineage>
        <taxon>Eukaryota</taxon>
        <taxon>Viridiplantae</taxon>
        <taxon>Streptophyta</taxon>
        <taxon>Embryophyta</taxon>
        <taxon>Tracheophyta</taxon>
        <taxon>Spermatophyta</taxon>
        <taxon>Magnoliopsida</taxon>
        <taxon>eudicotyledons</taxon>
        <taxon>Gunneridae</taxon>
        <taxon>Pentapetalae</taxon>
        <taxon>rosids</taxon>
        <taxon>malvids</taxon>
        <taxon>Brassicales</taxon>
        <taxon>Brassicaceae</taxon>
        <taxon>Brassiceae</taxon>
        <taxon>Brassica</taxon>
    </lineage>
</organism>
<protein>
    <recommendedName>
        <fullName>Non-specific lipid-transfer protein D</fullName>
        <shortName>LTP D</shortName>
    </recommendedName>
    <alternativeName>
        <fullName>Wax-associated protein 9D</fullName>
    </alternativeName>
</protein>
<feature type="signal peptide" evidence="1">
    <location>
        <begin position="1"/>
        <end position="25"/>
    </location>
</feature>
<feature type="chain" id="PRO_0000018373" description="Non-specific lipid-transfer protein D">
    <location>
        <begin position="26"/>
        <end position="118"/>
    </location>
</feature>
<feature type="disulfide bond" evidence="1">
    <location>
        <begin position="29"/>
        <end position="77"/>
    </location>
</feature>
<feature type="disulfide bond" evidence="1">
    <location>
        <begin position="39"/>
        <end position="54"/>
    </location>
</feature>
<feature type="disulfide bond" evidence="1">
    <location>
        <begin position="55"/>
        <end position="100"/>
    </location>
</feature>
<feature type="disulfide bond" evidence="1">
    <location>
        <begin position="75"/>
        <end position="114"/>
    </location>
</feature>
<dbReference type="EMBL" id="L29767">
    <property type="protein sequence ID" value="AAA32995.1"/>
    <property type="molecule type" value="mRNA"/>
</dbReference>
<dbReference type="EMBL" id="L33907">
    <property type="protein sequence ID" value="AAA73948.1"/>
    <property type="molecule type" value="Genomic_DNA"/>
</dbReference>
<dbReference type="PIR" id="S45680">
    <property type="entry name" value="S45680"/>
</dbReference>
<dbReference type="SMR" id="Q43304"/>
<dbReference type="GO" id="GO:0008289">
    <property type="term" value="F:lipid binding"/>
    <property type="evidence" value="ECO:0007669"/>
    <property type="project" value="UniProtKB-KW"/>
</dbReference>
<dbReference type="GO" id="GO:0006869">
    <property type="term" value="P:lipid transport"/>
    <property type="evidence" value="ECO:0007669"/>
    <property type="project" value="InterPro"/>
</dbReference>
<dbReference type="CDD" id="cd01960">
    <property type="entry name" value="nsLTP1"/>
    <property type="match status" value="1"/>
</dbReference>
<dbReference type="FunFam" id="1.10.110.10:FF:000002">
    <property type="entry name" value="Non-specific lipid-transfer protein"/>
    <property type="match status" value="1"/>
</dbReference>
<dbReference type="Gene3D" id="1.10.110.10">
    <property type="entry name" value="Plant lipid-transfer and hydrophobic proteins"/>
    <property type="match status" value="1"/>
</dbReference>
<dbReference type="InterPro" id="IPR036312">
    <property type="entry name" value="Bifun_inhib/LTP/seed_sf"/>
</dbReference>
<dbReference type="InterPro" id="IPR016140">
    <property type="entry name" value="Bifunc_inhib/LTP/seed_store"/>
</dbReference>
<dbReference type="InterPro" id="IPR000528">
    <property type="entry name" value="Plant_nsLTP"/>
</dbReference>
<dbReference type="PANTHER" id="PTHR33076">
    <property type="entry name" value="NON-SPECIFIC LIPID-TRANSFER PROTEIN 2-RELATED"/>
    <property type="match status" value="1"/>
</dbReference>
<dbReference type="Pfam" id="PF00234">
    <property type="entry name" value="Tryp_alpha_amyl"/>
    <property type="match status" value="1"/>
</dbReference>
<dbReference type="PRINTS" id="PR00382">
    <property type="entry name" value="LIPIDTRNSFER"/>
</dbReference>
<dbReference type="SMART" id="SM00499">
    <property type="entry name" value="AAI"/>
    <property type="match status" value="1"/>
</dbReference>
<dbReference type="SUPFAM" id="SSF47699">
    <property type="entry name" value="Bifunctional inhibitor/lipid-transfer protein/seed storage 2S albumin"/>
    <property type="match status" value="1"/>
</dbReference>
<dbReference type="PROSITE" id="PS00597">
    <property type="entry name" value="PLANT_LTP"/>
    <property type="match status" value="1"/>
</dbReference>
<proteinExistence type="inferred from homology"/>
<comment type="function">
    <text>Plant non-specific lipid-transfer proteins transfer phospholipids as well as galactolipids across membranes. May play a role in wax or cutin deposition in the cell walls of expanding epidermal cells and certain secretory tissues.</text>
</comment>
<comment type="similarity">
    <text evidence="2">Belongs to the plant LTP family.</text>
</comment>
<keyword id="KW-1015">Disulfide bond</keyword>
<keyword id="KW-0446">Lipid-binding</keyword>
<keyword id="KW-0732">Signal</keyword>
<keyword id="KW-0813">Transport</keyword>
<evidence type="ECO:0000255" key="1"/>
<evidence type="ECO:0000305" key="2"/>
<reference key="1">
    <citation type="journal article" date="1994" name="Arch. Biochem. Biophys.">
        <title>Identification of a lipid transfer protein as the major protein in the surface wax of broccoli (Brassica oleracea) leaves.</title>
        <authorList>
            <person name="Pyee J."/>
            <person name="Yu H."/>
            <person name="Kolattukudy P.E."/>
        </authorList>
    </citation>
    <scope>NUCLEOTIDE SEQUENCE [MRNA]</scope>
    <source>
        <tissue>Leaf</tissue>
    </source>
</reference>
<reference key="2">
    <citation type="journal article" date="1995" name="Plant J.">
        <title>The gene for the major cuticular wax-associated protein and three homologous genes from broccoli (Brassica oleracea) and their expression patterns.</title>
        <authorList>
            <person name="Pyee J."/>
            <person name="Kolattukudy P.E."/>
        </authorList>
    </citation>
    <scope>NUCLEOTIDE SEQUENCE [GENOMIC DNA]</scope>
    <source>
        <strain>cv. Green sprouting</strain>
        <tissue>Leaf</tissue>
    </source>
</reference>